<keyword id="KW-0066">ATP synthesis</keyword>
<keyword id="KW-0997">Cell inner membrane</keyword>
<keyword id="KW-1003">Cell membrane</keyword>
<keyword id="KW-0139">CF(1)</keyword>
<keyword id="KW-0375">Hydrogen ion transport</keyword>
<keyword id="KW-0406">Ion transport</keyword>
<keyword id="KW-0472">Membrane</keyword>
<keyword id="KW-1185">Reference proteome</keyword>
<keyword id="KW-0813">Transport</keyword>
<reference key="1">
    <citation type="journal article" date="2009" name="Environ. Microbiol.">
        <title>Genome sequence of Desulfobacterium autotrophicum HRM2, a marine sulfate reducer oxidizing organic carbon completely to carbon dioxide.</title>
        <authorList>
            <person name="Strittmatter A.W."/>
            <person name="Liesegang H."/>
            <person name="Rabus R."/>
            <person name="Decker I."/>
            <person name="Amann J."/>
            <person name="Andres S."/>
            <person name="Henne A."/>
            <person name="Fricke W.F."/>
            <person name="Martinez-Arias R."/>
            <person name="Bartels D."/>
            <person name="Goesmann A."/>
            <person name="Krause L."/>
            <person name="Puehler A."/>
            <person name="Klenk H.P."/>
            <person name="Richter M."/>
            <person name="Schuler M."/>
            <person name="Gloeckner F.O."/>
            <person name="Meyerdierks A."/>
            <person name="Gottschalk G."/>
            <person name="Amann R."/>
        </authorList>
    </citation>
    <scope>NUCLEOTIDE SEQUENCE [LARGE SCALE GENOMIC DNA]</scope>
    <source>
        <strain>ATCC 43914 / DSM 3382 / VKM B-1955 / HRM2</strain>
    </source>
</reference>
<name>ATPD_DESAH</name>
<evidence type="ECO:0000255" key="1">
    <source>
        <dbReference type="HAMAP-Rule" id="MF_01416"/>
    </source>
</evidence>
<feature type="chain" id="PRO_0000382094" description="ATP synthase subunit delta">
    <location>
        <begin position="1"/>
        <end position="183"/>
    </location>
</feature>
<accession>C0Q981</accession>
<comment type="function">
    <text evidence="1">F(1)F(0) ATP synthase produces ATP from ADP in the presence of a proton or sodium gradient. F-type ATPases consist of two structural domains, F(1) containing the extramembraneous catalytic core and F(0) containing the membrane proton channel, linked together by a central stalk and a peripheral stalk. During catalysis, ATP synthesis in the catalytic domain of F(1) is coupled via a rotary mechanism of the central stalk subunits to proton translocation.</text>
</comment>
<comment type="function">
    <text evidence="1">This protein is part of the stalk that links CF(0) to CF(1). It either transmits conformational changes from CF(0) to CF(1) or is implicated in proton conduction.</text>
</comment>
<comment type="subunit">
    <text evidence="1">F-type ATPases have 2 components, F(1) - the catalytic core - and F(0) - the membrane proton channel. F(1) has five subunits: alpha(3), beta(3), gamma(1), delta(1), epsilon(1). F(0) has three main subunits: a(1), b(2) and c(10-14). The alpha and beta chains form an alternating ring which encloses part of the gamma chain. F(1) is attached to F(0) by a central stalk formed by the gamma and epsilon chains, while a peripheral stalk is formed by the delta and b chains.</text>
</comment>
<comment type="subcellular location">
    <subcellularLocation>
        <location evidence="1">Cell inner membrane</location>
        <topology evidence="1">Peripheral membrane protein</topology>
    </subcellularLocation>
</comment>
<comment type="similarity">
    <text evidence="1">Belongs to the ATPase delta chain family.</text>
</comment>
<gene>
    <name evidence="1" type="primary">atpH</name>
    <name type="ordered locus">HRM2_35200</name>
</gene>
<protein>
    <recommendedName>
        <fullName evidence="1">ATP synthase subunit delta</fullName>
    </recommendedName>
    <alternativeName>
        <fullName evidence="1">ATP synthase F(1) sector subunit delta</fullName>
    </alternativeName>
    <alternativeName>
        <fullName evidence="1">F-type ATPase subunit delta</fullName>
        <shortName evidence="1">F-ATPase subunit delta</shortName>
    </alternativeName>
</protein>
<proteinExistence type="inferred from homology"/>
<organism>
    <name type="scientific">Desulforapulum autotrophicum (strain ATCC 43914 / DSM 3382 / VKM B-1955 / HRM2)</name>
    <name type="common">Desulfobacterium autotrophicum</name>
    <dbReference type="NCBI Taxonomy" id="177437"/>
    <lineage>
        <taxon>Bacteria</taxon>
        <taxon>Pseudomonadati</taxon>
        <taxon>Thermodesulfobacteriota</taxon>
        <taxon>Desulfobacteria</taxon>
        <taxon>Desulfobacterales</taxon>
        <taxon>Desulfobacteraceae</taxon>
        <taxon>Desulforapulum</taxon>
    </lineage>
</organism>
<sequence>MKSVSVSRRYATALMLIGKEDGNTDQYRKELDDIVQFFDANPELEQTISNPLYDKNDRKNVLIAVLDKGGLSKVMKSFLILLFAKARISFIREVCEFYYSLADELKGVVHATLVSATELSSDAVEKIRAGLATRIGKDIVLDVEQDPSLLGGVVTKIGDLVLDGSVKTQLFNMRETLKRGESA</sequence>
<dbReference type="EMBL" id="CP001087">
    <property type="protein sequence ID" value="ACN16586.1"/>
    <property type="molecule type" value="Genomic_DNA"/>
</dbReference>
<dbReference type="RefSeq" id="WP_015905336.1">
    <property type="nucleotide sequence ID" value="NC_012108.1"/>
</dbReference>
<dbReference type="SMR" id="C0Q981"/>
<dbReference type="STRING" id="177437.HRM2_35200"/>
<dbReference type="KEGG" id="dat:HRM2_35200"/>
<dbReference type="eggNOG" id="COG0712">
    <property type="taxonomic scope" value="Bacteria"/>
</dbReference>
<dbReference type="HOGENOM" id="CLU_085114_1_1_7"/>
<dbReference type="OrthoDB" id="9802471at2"/>
<dbReference type="Proteomes" id="UP000000442">
    <property type="component" value="Chromosome"/>
</dbReference>
<dbReference type="GO" id="GO:0005886">
    <property type="term" value="C:plasma membrane"/>
    <property type="evidence" value="ECO:0007669"/>
    <property type="project" value="UniProtKB-SubCell"/>
</dbReference>
<dbReference type="GO" id="GO:0045259">
    <property type="term" value="C:proton-transporting ATP synthase complex"/>
    <property type="evidence" value="ECO:0007669"/>
    <property type="project" value="UniProtKB-KW"/>
</dbReference>
<dbReference type="GO" id="GO:0046933">
    <property type="term" value="F:proton-transporting ATP synthase activity, rotational mechanism"/>
    <property type="evidence" value="ECO:0007669"/>
    <property type="project" value="UniProtKB-UniRule"/>
</dbReference>
<dbReference type="Gene3D" id="1.10.520.20">
    <property type="entry name" value="N-terminal domain of the delta subunit of the F1F0-ATP synthase"/>
    <property type="match status" value="1"/>
</dbReference>
<dbReference type="HAMAP" id="MF_01416">
    <property type="entry name" value="ATP_synth_delta_bact"/>
    <property type="match status" value="1"/>
</dbReference>
<dbReference type="InterPro" id="IPR026015">
    <property type="entry name" value="ATP_synth_OSCP/delta_N_sf"/>
</dbReference>
<dbReference type="InterPro" id="IPR000711">
    <property type="entry name" value="ATPase_OSCP/dsu"/>
</dbReference>
<dbReference type="NCBIfam" id="TIGR01145">
    <property type="entry name" value="ATP_synt_delta"/>
    <property type="match status" value="1"/>
</dbReference>
<dbReference type="PANTHER" id="PTHR11910">
    <property type="entry name" value="ATP SYNTHASE DELTA CHAIN"/>
    <property type="match status" value="1"/>
</dbReference>
<dbReference type="Pfam" id="PF00213">
    <property type="entry name" value="OSCP"/>
    <property type="match status" value="1"/>
</dbReference>
<dbReference type="PRINTS" id="PR00125">
    <property type="entry name" value="ATPASEDELTA"/>
</dbReference>
<dbReference type="SUPFAM" id="SSF47928">
    <property type="entry name" value="N-terminal domain of the delta subunit of the F1F0-ATP synthase"/>
    <property type="match status" value="1"/>
</dbReference>